<feature type="signal peptide" evidence="2">
    <location>
        <begin position="1"/>
        <end position="28"/>
    </location>
</feature>
<feature type="chain" id="PRO_0000031055" description="Protein yellow">
    <location>
        <begin position="29"/>
        <end position="568"/>
    </location>
</feature>
<feature type="glycosylation site" description="N-linked (GlcNAc...) asparagine" evidence="2">
    <location>
        <position position="151"/>
    </location>
</feature>
<feature type="glycosylation site" description="N-linked (GlcNAc...) asparagine" evidence="2">
    <location>
        <position position="222"/>
    </location>
</feature>
<feature type="sequence variant" description="In strain: 417RIB/A1.">
    <original>GG</original>
    <variation>EE</variation>
    <location>
        <begin position="7"/>
        <end position="8"/>
    </location>
</feature>
<feature type="sequence variant" description="In strain: 205RIB/A2, 208RIB/A2, 209RIB/A2, 211RIB/A2 and 240RIB/AST.">
    <original>I</original>
    <variation>V</variation>
    <location>
        <position position="9"/>
    </location>
</feature>
<feature type="sequence variant" description="In strain: 201RIB/A1.">
    <original>N</original>
    <variation>H</variation>
    <location>
        <position position="155"/>
    </location>
</feature>
<feature type="sequence variant" description="In strain: 200RIB/A1, 201RIB/A1, 203RIB/A1, 233RIB/A1, 238RIB/AST, 332RIB/A1, 358RIB/A1, 394RIB/A1, 417RIB/A1 and 441RIB/A1.">
    <original>I</original>
    <variation>V</variation>
    <location>
        <position position="163"/>
    </location>
</feature>
<feature type="sequence variant" description="In strain: 200RIB/A1, 201RIB/A1, 203RIB/A1, 233RIB/A1, 238RIB/AST, 332RIB/A1, 358RIB/A1, 394RIB/A1, 417RIB/A1 and 441RIB/A1.">
    <original>A</original>
    <variation>T</variation>
    <location>
        <position position="167"/>
    </location>
</feature>
<feature type="sequence variant" description="In strain: 200RIB/A1, 238RIB/AST, 358RIB/A1, 340RIB/A1, 394RIB/A1 and 441RIB/A1.">
    <original>S</original>
    <variation>N</variation>
    <location>
        <position position="198"/>
    </location>
</feature>
<feature type="sequence variant" description="In strain: 240RIB/Ast.">
    <original>T</original>
    <variation>S</variation>
    <location>
        <position position="262"/>
    </location>
</feature>
<feature type="sequence variant" description="In strain: 205RIB/A2.">
    <original>D</original>
    <variation>N</variation>
    <location>
        <position position="323"/>
    </location>
</feature>
<feature type="sequence variant" description="In strain: 200RIB/A1, 201RIB/A1, 203RIB/A1, 233RIB/A1, 332RIB/A1, 340RIB/A1, 358RIB/A1, 394RIB/A1, 441RIB/A1 and 417RIB/A1.">
    <original>P</original>
    <variation>S</variation>
    <location>
        <position position="451"/>
    </location>
</feature>
<feature type="sequence variant" description="In strain: 206RIB/AST.">
    <original>G</original>
    <variation>S</variation>
    <location>
        <position position="476"/>
    </location>
</feature>
<feature type="sequence variant" description="In strain: 211RIB/A2.">
    <original>I</original>
    <variation>V</variation>
    <location>
        <position position="480"/>
    </location>
</feature>
<dbReference type="EMBL" id="Y13909">
    <property type="protein sequence ID" value="CAA74207.1"/>
    <property type="molecule type" value="Genomic_DNA"/>
</dbReference>
<dbReference type="EMBL" id="AJ289811">
    <property type="protein sequence ID" value="CAC16212.1"/>
    <property type="molecule type" value="Genomic_DNA"/>
</dbReference>
<dbReference type="EMBL" id="AJ289787">
    <property type="protein sequence ID" value="CAC16188.1"/>
    <property type="molecule type" value="Genomic_DNA"/>
</dbReference>
<dbReference type="EMBL" id="AJ289788">
    <property type="protein sequence ID" value="CAC16189.1"/>
    <property type="molecule type" value="Genomic_DNA"/>
</dbReference>
<dbReference type="EMBL" id="AJ289789">
    <property type="protein sequence ID" value="CAC16190.1"/>
    <property type="molecule type" value="Genomic_DNA"/>
</dbReference>
<dbReference type="EMBL" id="AJ289790">
    <property type="protein sequence ID" value="CAC16191.1"/>
    <property type="molecule type" value="Genomic_DNA"/>
</dbReference>
<dbReference type="EMBL" id="AJ289791">
    <property type="protein sequence ID" value="CAC16192.1"/>
    <property type="molecule type" value="Genomic_DNA"/>
</dbReference>
<dbReference type="EMBL" id="AJ289792">
    <property type="protein sequence ID" value="CAC16193.1"/>
    <property type="molecule type" value="Genomic_DNA"/>
</dbReference>
<dbReference type="EMBL" id="AJ289793">
    <property type="protein sequence ID" value="CAC16194.1"/>
    <property type="molecule type" value="Genomic_DNA"/>
</dbReference>
<dbReference type="EMBL" id="AJ289794">
    <property type="protein sequence ID" value="CAC16195.1"/>
    <property type="molecule type" value="Genomic_DNA"/>
</dbReference>
<dbReference type="EMBL" id="AJ289795">
    <property type="protein sequence ID" value="CAC16196.1"/>
    <property type="molecule type" value="Genomic_DNA"/>
</dbReference>
<dbReference type="EMBL" id="AJ289796">
    <property type="protein sequence ID" value="CAC16197.1"/>
    <property type="molecule type" value="Genomic_DNA"/>
</dbReference>
<dbReference type="EMBL" id="AJ289797">
    <property type="protein sequence ID" value="CAC16198.1"/>
    <property type="molecule type" value="Genomic_DNA"/>
</dbReference>
<dbReference type="EMBL" id="AJ289798">
    <property type="protein sequence ID" value="CAC16199.1"/>
    <property type="molecule type" value="Genomic_DNA"/>
</dbReference>
<dbReference type="EMBL" id="AJ289799">
    <property type="protein sequence ID" value="CAC16200.1"/>
    <property type="molecule type" value="Genomic_DNA"/>
</dbReference>
<dbReference type="EMBL" id="AJ289800">
    <property type="protein sequence ID" value="CAC16201.1"/>
    <property type="molecule type" value="Genomic_DNA"/>
</dbReference>
<dbReference type="EMBL" id="AJ289801">
    <property type="protein sequence ID" value="CAC16202.1"/>
    <property type="molecule type" value="Genomic_DNA"/>
</dbReference>
<dbReference type="EMBL" id="AJ289802">
    <property type="protein sequence ID" value="CAC16203.1"/>
    <property type="molecule type" value="Genomic_DNA"/>
</dbReference>
<dbReference type="EMBL" id="AJ289803">
    <property type="protein sequence ID" value="CAC16204.1"/>
    <property type="molecule type" value="Genomic_DNA"/>
</dbReference>
<dbReference type="EMBL" id="AJ289804">
    <property type="protein sequence ID" value="CAC16205.1"/>
    <property type="molecule type" value="Genomic_DNA"/>
</dbReference>
<dbReference type="EMBL" id="AJ289805">
    <property type="protein sequence ID" value="CAC16206.1"/>
    <property type="molecule type" value="Genomic_DNA"/>
</dbReference>
<dbReference type="EMBL" id="AJ289806">
    <property type="protein sequence ID" value="CAC16207.1"/>
    <property type="molecule type" value="Genomic_DNA"/>
</dbReference>
<dbReference type="EMBL" id="AJ289807">
    <property type="protein sequence ID" value="CAC16208.1"/>
    <property type="molecule type" value="Genomic_DNA"/>
</dbReference>
<dbReference type="EMBL" id="AJ289808">
    <property type="protein sequence ID" value="CAC16209.1"/>
    <property type="molecule type" value="Genomic_DNA"/>
</dbReference>
<dbReference type="EMBL" id="AJ289809">
    <property type="protein sequence ID" value="CAC16210.1"/>
    <property type="molecule type" value="Genomic_DNA"/>
</dbReference>
<dbReference type="EMBL" id="AJ289810">
    <property type="protein sequence ID" value="CAC16211.1"/>
    <property type="molecule type" value="Genomic_DNA"/>
</dbReference>
<dbReference type="SMR" id="O02437"/>
<dbReference type="GlyCosmos" id="O02437">
    <property type="glycosylation" value="2 sites, No reported glycans"/>
</dbReference>
<dbReference type="EnsemblMetazoa" id="XM_034798418.1">
    <property type="protein sequence ID" value="XP_034654309.1"/>
    <property type="gene ID" value="LOC117892289"/>
</dbReference>
<dbReference type="FlyBase" id="FBgn0015179">
    <property type="gene designation" value="Dsub\y"/>
</dbReference>
<dbReference type="GO" id="GO:0005576">
    <property type="term" value="C:extracellular region"/>
    <property type="evidence" value="ECO:0007669"/>
    <property type="project" value="UniProtKB-SubCell"/>
</dbReference>
<dbReference type="FunFam" id="2.120.10.30:FF:000046">
    <property type="entry name" value="Blast:Protein yellow"/>
    <property type="match status" value="1"/>
</dbReference>
<dbReference type="Gene3D" id="2.120.10.30">
    <property type="entry name" value="TolB, C-terminal domain"/>
    <property type="match status" value="1"/>
</dbReference>
<dbReference type="InterPro" id="IPR011042">
    <property type="entry name" value="6-blade_b-propeller_TolB-like"/>
</dbReference>
<dbReference type="InterPro" id="IPR017996">
    <property type="entry name" value="Royal_jelly/protein_yellow"/>
</dbReference>
<dbReference type="PANTHER" id="PTHR10009:SF14">
    <property type="entry name" value="PROTEIN YELLOW"/>
    <property type="match status" value="1"/>
</dbReference>
<dbReference type="PANTHER" id="PTHR10009">
    <property type="entry name" value="PROTEIN YELLOW-RELATED"/>
    <property type="match status" value="1"/>
</dbReference>
<dbReference type="Pfam" id="PF03022">
    <property type="entry name" value="MRJP"/>
    <property type="match status" value="1"/>
</dbReference>
<dbReference type="PRINTS" id="PR01366">
    <property type="entry name" value="ROYALJELLY"/>
</dbReference>
<keyword id="KW-0217">Developmental protein</keyword>
<keyword id="KW-0325">Glycoprotein</keyword>
<keyword id="KW-0964">Secreted</keyword>
<keyword id="KW-0732">Signal</keyword>
<proteinExistence type="inferred from homology"/>
<gene>
    <name type="primary">y</name>
</gene>
<organism>
    <name type="scientific">Drosophila subobscura</name>
    <name type="common">Fruit fly</name>
    <dbReference type="NCBI Taxonomy" id="7241"/>
    <lineage>
        <taxon>Eukaryota</taxon>
        <taxon>Metazoa</taxon>
        <taxon>Ecdysozoa</taxon>
        <taxon>Arthropoda</taxon>
        <taxon>Hexapoda</taxon>
        <taxon>Insecta</taxon>
        <taxon>Pterygota</taxon>
        <taxon>Neoptera</taxon>
        <taxon>Endopterygota</taxon>
        <taxon>Diptera</taxon>
        <taxon>Brachycera</taxon>
        <taxon>Muscomorpha</taxon>
        <taxon>Ephydroidea</taxon>
        <taxon>Drosophilidae</taxon>
        <taxon>Drosophila</taxon>
        <taxon>Sophophora</taxon>
    </lineage>
</organism>
<sequence length="568" mass="62590">MHAQDKGGILPALSLLLIAVAMVSPSQAAYKLQERYSWNQLDFAFPSARLKEQALASGDYIPTNALPVGVEHFGNRLFVTVPRWRDGIPATLTYINMDHSVTGSPELIPYPDWRANTAGDCANSITTAYRIKVDECGRLWVLDTGTVGIGNTTTNPCPYAINIFDLATDTRIRRYELPAADTNPNTFIANIAVDIGKSCDDAFAYFADELGYGLISYSWELNKSWRFSAHSYFFPDPLRGDFNVAGINFQWGEEGIFGMSLTPIRSDGYRTLYFSPLASHRQFAVSTRILRDETRTEDSYHDFVALDERGPNAHTTSRVMSDDGVELFNLIDQNAVGCWHSSMPYSPQSHGIVDRDDVGLVFPADIKIDENKNVWVLSDRMPVFLLSDLDYSDTNFRIYTAPLATLIENTVCDLRNNAYGPPNTVSIPKQAAPGHSAVGPPLYTTTNQYRPVLSQKPQTSWGPSLPSRNYLPALNGNPGIPGSRNNLNNLGAPGQVVSSVSVSTNTVGPSGIEVPKAYVFNQHNGLNYETSGPHLFPTLQPAPSQLGGGLKTYVNARQSGWWHHQQQG</sequence>
<comment type="function">
    <text evidence="1">Controls the pigmentation pattern of the adult cuticle and larval mouth parts.</text>
</comment>
<comment type="subcellular location">
    <subcellularLocation>
        <location>Secreted</location>
    </subcellularLocation>
</comment>
<comment type="similarity">
    <text evidence="3">Belongs to the major royal jelly protein family.</text>
</comment>
<accession>O02437</accession>
<accession>Q9GN26</accession>
<accession>Q9GNB8</accession>
<accession>Q9GNE1</accession>
<accession>Q9GP52</accession>
<accession>Q9GP53</accession>
<accession>Q9GP54</accession>
<accession>Q9GP55</accession>
<accession>Q9GP56</accession>
<accession>Q9GP57</accession>
<accession>Q9GP58</accession>
<accession>Q9GP59</accession>
<name>YELL_DROSU</name>
<protein>
    <recommendedName>
        <fullName>Protein yellow</fullName>
    </recommendedName>
</protein>
<evidence type="ECO:0000250" key="1"/>
<evidence type="ECO:0000255" key="2"/>
<evidence type="ECO:0000305" key="3"/>
<reference key="1">
    <citation type="journal article" date="1997" name="Genetics">
        <title>Divergence of the yellow gene between Drosophila melanogaster and D. subobscura: recombination rate, codon bias and synonymous substitutions.</title>
        <authorList>
            <person name="Munte A."/>
            <person name="Aguade M."/>
            <person name="Segarra C."/>
        </authorList>
    </citation>
    <scope>NUCLEOTIDE SEQUENCE [GENOMIC DNA]</scope>
</reference>
<reference key="2">
    <citation type="journal article" date="2000" name="Mol. Biol. Evol.">
        <title>Nucleotide variation at the yellow gene region is not reduced in Drosophila subobscura: a study in relation to chromosomal polymorphism.</title>
        <authorList>
            <person name="Munte A."/>
            <person name="Aguade M."/>
            <person name="Segarra C."/>
        </authorList>
    </citation>
    <scope>NUCLEOTIDE SEQUENCE [GENOMIC DNA]</scope>
    <source>
        <strain>Various strains</strain>
    </source>
</reference>